<comment type="function">
    <text evidence="1">Binds to DNA and alters its conformation. May be involved in regulation of gene expression, nucleoid organization and DNA protection.</text>
</comment>
<comment type="subunit">
    <text evidence="1">Homodimer.</text>
</comment>
<comment type="subcellular location">
    <subcellularLocation>
        <location evidence="1">Cytoplasm</location>
        <location evidence="1">Nucleoid</location>
    </subcellularLocation>
</comment>
<comment type="similarity">
    <text evidence="1">Belongs to the YbaB/EbfC family.</text>
</comment>
<feature type="chain" id="PRO_1000204780" description="Nucleoid-associated protein RPR_07555">
    <location>
        <begin position="1"/>
        <end position="107"/>
    </location>
</feature>
<accession>C4K2W9</accession>
<gene>
    <name type="ordered locus">RPR_07555</name>
</gene>
<keyword id="KW-0963">Cytoplasm</keyword>
<keyword id="KW-0238">DNA-binding</keyword>
<sequence>MVNFNQFLKQAQSMQKKMQEAQEQMANARYTGKAGGGLVEVIATGKGEVEKISIDESLLKAEEKEMLEDLIKVAFNDAQQKCDEDSQNSLSGALNGMRLPPGFKMPF</sequence>
<reference key="1">
    <citation type="journal article" date="2009" name="PLoS ONE">
        <title>Genome sequence of the endosymbiont Rickettsia peacockii and comparison with virulent Rickettsia rickettsii: identification of virulence factors.</title>
        <authorList>
            <person name="Felsheim R.F."/>
            <person name="Kurtti T.J."/>
            <person name="Munderloh U.G."/>
        </authorList>
    </citation>
    <scope>NUCLEOTIDE SEQUENCE [LARGE SCALE GENOMIC DNA]</scope>
    <source>
        <strain>Rustic</strain>
    </source>
</reference>
<protein>
    <recommendedName>
        <fullName evidence="1">Nucleoid-associated protein RPR_07555</fullName>
    </recommendedName>
</protein>
<name>Y7555_RICPU</name>
<organism>
    <name type="scientific">Rickettsia peacockii (strain Rustic)</name>
    <dbReference type="NCBI Taxonomy" id="562019"/>
    <lineage>
        <taxon>Bacteria</taxon>
        <taxon>Pseudomonadati</taxon>
        <taxon>Pseudomonadota</taxon>
        <taxon>Alphaproteobacteria</taxon>
        <taxon>Rickettsiales</taxon>
        <taxon>Rickettsiaceae</taxon>
        <taxon>Rickettsieae</taxon>
        <taxon>Rickettsia</taxon>
        <taxon>spotted fever group</taxon>
    </lineage>
</organism>
<dbReference type="EMBL" id="CP001227">
    <property type="protein sequence ID" value="ACR47914.1"/>
    <property type="molecule type" value="Genomic_DNA"/>
</dbReference>
<dbReference type="RefSeq" id="WP_010977891.1">
    <property type="nucleotide sequence ID" value="NC_012730.1"/>
</dbReference>
<dbReference type="SMR" id="C4K2W9"/>
<dbReference type="GeneID" id="928485"/>
<dbReference type="KEGG" id="rpk:RPR_07555"/>
<dbReference type="HOGENOM" id="CLU_140930_0_0_5"/>
<dbReference type="Proteomes" id="UP000005015">
    <property type="component" value="Chromosome"/>
</dbReference>
<dbReference type="GO" id="GO:0043590">
    <property type="term" value="C:bacterial nucleoid"/>
    <property type="evidence" value="ECO:0007669"/>
    <property type="project" value="UniProtKB-UniRule"/>
</dbReference>
<dbReference type="GO" id="GO:0005829">
    <property type="term" value="C:cytosol"/>
    <property type="evidence" value="ECO:0007669"/>
    <property type="project" value="TreeGrafter"/>
</dbReference>
<dbReference type="GO" id="GO:0003677">
    <property type="term" value="F:DNA binding"/>
    <property type="evidence" value="ECO:0007669"/>
    <property type="project" value="UniProtKB-UniRule"/>
</dbReference>
<dbReference type="Gene3D" id="3.30.1310.10">
    <property type="entry name" value="Nucleoid-associated protein YbaB-like domain"/>
    <property type="match status" value="1"/>
</dbReference>
<dbReference type="HAMAP" id="MF_00274">
    <property type="entry name" value="DNA_YbaB_EbfC"/>
    <property type="match status" value="1"/>
</dbReference>
<dbReference type="InterPro" id="IPR036894">
    <property type="entry name" value="YbaB-like_sf"/>
</dbReference>
<dbReference type="InterPro" id="IPR004401">
    <property type="entry name" value="YbaB/EbfC"/>
</dbReference>
<dbReference type="NCBIfam" id="TIGR00103">
    <property type="entry name" value="DNA_YbaB_EbfC"/>
    <property type="match status" value="1"/>
</dbReference>
<dbReference type="PANTHER" id="PTHR33449">
    <property type="entry name" value="NUCLEOID-ASSOCIATED PROTEIN YBAB"/>
    <property type="match status" value="1"/>
</dbReference>
<dbReference type="PANTHER" id="PTHR33449:SF1">
    <property type="entry name" value="NUCLEOID-ASSOCIATED PROTEIN YBAB"/>
    <property type="match status" value="1"/>
</dbReference>
<dbReference type="Pfam" id="PF02575">
    <property type="entry name" value="YbaB_DNA_bd"/>
    <property type="match status" value="1"/>
</dbReference>
<dbReference type="PIRSF" id="PIRSF004555">
    <property type="entry name" value="UCP004555"/>
    <property type="match status" value="1"/>
</dbReference>
<dbReference type="SUPFAM" id="SSF82607">
    <property type="entry name" value="YbaB-like"/>
    <property type="match status" value="1"/>
</dbReference>
<proteinExistence type="inferred from homology"/>
<evidence type="ECO:0000255" key="1">
    <source>
        <dbReference type="HAMAP-Rule" id="MF_00274"/>
    </source>
</evidence>